<gene>
    <name evidence="1" type="primary">accA</name>
    <name type="ordered locus">Rxyl_2087</name>
</gene>
<sequence>MLDFERPIKELEERIAELHRLAGESEGLQAEISRLEEALEAARRRIYTNLSPYQRVQVARHPERPNFRAYRDALCEDFYELSGDRHYGDDAAVRGGFARIRGRNVVLIGHDKGADVKSRVEGNFGMAHPEGYRKVKRLYGLAARFGLPVVTLVDTPGAFAGRGAEERGQAWAISEDLMALAAVPVPVVSVIIGEGGSGGALAMCLADYLGMLENSYLSVIAPEACASIIFRDSSRAPEAAEALKLTARDLKEHGVVDEVLPEPLGGAHRDPEAAIRAVGEALERVLAGVSGSSPEDLLKRRYARYRRIGSYQRLPGPSSG</sequence>
<organism>
    <name type="scientific">Rubrobacter xylanophilus (strain DSM 9941 / JCM 11954 / NBRC 16129 / PRD-1)</name>
    <dbReference type="NCBI Taxonomy" id="266117"/>
    <lineage>
        <taxon>Bacteria</taxon>
        <taxon>Bacillati</taxon>
        <taxon>Actinomycetota</taxon>
        <taxon>Rubrobacteria</taxon>
        <taxon>Rubrobacterales</taxon>
        <taxon>Rubrobacteraceae</taxon>
        <taxon>Rubrobacter</taxon>
    </lineage>
</organism>
<proteinExistence type="inferred from homology"/>
<protein>
    <recommendedName>
        <fullName evidence="1">Acetyl-coenzyme A carboxylase carboxyl transferase subunit alpha</fullName>
        <shortName evidence="1">ACCase subunit alpha</shortName>
        <shortName evidence="1">Acetyl-CoA carboxylase carboxyltransferase subunit alpha</shortName>
        <ecNumber evidence="1">2.1.3.15</ecNumber>
    </recommendedName>
</protein>
<feature type="chain" id="PRO_1000134513" description="Acetyl-coenzyme A carboxylase carboxyl transferase subunit alpha">
    <location>
        <begin position="1"/>
        <end position="320"/>
    </location>
</feature>
<feature type="domain" description="CoA carboxyltransferase C-terminal" evidence="2">
    <location>
        <begin position="34"/>
        <end position="288"/>
    </location>
</feature>
<comment type="function">
    <text evidence="1">Component of the acetyl coenzyme A carboxylase (ACC) complex. First, biotin carboxylase catalyzes the carboxylation of biotin on its carrier protein (BCCP) and then the CO(2) group is transferred by the carboxyltransferase to acetyl-CoA to form malonyl-CoA.</text>
</comment>
<comment type="catalytic activity">
    <reaction evidence="1">
        <text>N(6)-carboxybiotinyl-L-lysyl-[protein] + acetyl-CoA = N(6)-biotinyl-L-lysyl-[protein] + malonyl-CoA</text>
        <dbReference type="Rhea" id="RHEA:54728"/>
        <dbReference type="Rhea" id="RHEA-COMP:10505"/>
        <dbReference type="Rhea" id="RHEA-COMP:10506"/>
        <dbReference type="ChEBI" id="CHEBI:57288"/>
        <dbReference type="ChEBI" id="CHEBI:57384"/>
        <dbReference type="ChEBI" id="CHEBI:83144"/>
        <dbReference type="ChEBI" id="CHEBI:83145"/>
        <dbReference type="EC" id="2.1.3.15"/>
    </reaction>
</comment>
<comment type="pathway">
    <text evidence="1">Lipid metabolism; malonyl-CoA biosynthesis; malonyl-CoA from acetyl-CoA: step 1/1.</text>
</comment>
<comment type="subunit">
    <text evidence="1">Acetyl-CoA carboxylase is a heterohexamer composed of biotin carboxyl carrier protein (AccB), biotin carboxylase (AccC) and two subunits each of ACCase subunit alpha (AccA) and ACCase subunit beta (AccD).</text>
</comment>
<comment type="subcellular location">
    <subcellularLocation>
        <location evidence="1">Cytoplasm</location>
    </subcellularLocation>
</comment>
<comment type="similarity">
    <text evidence="1">Belongs to the AccA family.</text>
</comment>
<keyword id="KW-0067">ATP-binding</keyword>
<keyword id="KW-0963">Cytoplasm</keyword>
<keyword id="KW-0275">Fatty acid biosynthesis</keyword>
<keyword id="KW-0276">Fatty acid metabolism</keyword>
<keyword id="KW-0444">Lipid biosynthesis</keyword>
<keyword id="KW-0443">Lipid metabolism</keyword>
<keyword id="KW-0547">Nucleotide-binding</keyword>
<keyword id="KW-1185">Reference proteome</keyword>
<keyword id="KW-0808">Transferase</keyword>
<evidence type="ECO:0000255" key="1">
    <source>
        <dbReference type="HAMAP-Rule" id="MF_00823"/>
    </source>
</evidence>
<evidence type="ECO:0000255" key="2">
    <source>
        <dbReference type="PROSITE-ProRule" id="PRU01137"/>
    </source>
</evidence>
<accession>Q1AU97</accession>
<dbReference type="EC" id="2.1.3.15" evidence="1"/>
<dbReference type="EMBL" id="CP000386">
    <property type="protein sequence ID" value="ABG05031.1"/>
    <property type="molecule type" value="Genomic_DNA"/>
</dbReference>
<dbReference type="RefSeq" id="WP_011565046.1">
    <property type="nucleotide sequence ID" value="NC_008148.1"/>
</dbReference>
<dbReference type="SMR" id="Q1AU97"/>
<dbReference type="STRING" id="266117.Rxyl_2087"/>
<dbReference type="KEGG" id="rxy:Rxyl_2087"/>
<dbReference type="eggNOG" id="COG0825">
    <property type="taxonomic scope" value="Bacteria"/>
</dbReference>
<dbReference type="HOGENOM" id="CLU_015486_0_2_11"/>
<dbReference type="OrthoDB" id="9772975at2"/>
<dbReference type="PhylomeDB" id="Q1AU97"/>
<dbReference type="UniPathway" id="UPA00655">
    <property type="reaction ID" value="UER00711"/>
</dbReference>
<dbReference type="Proteomes" id="UP000006637">
    <property type="component" value="Chromosome"/>
</dbReference>
<dbReference type="GO" id="GO:0009317">
    <property type="term" value="C:acetyl-CoA carboxylase complex"/>
    <property type="evidence" value="ECO:0007669"/>
    <property type="project" value="InterPro"/>
</dbReference>
<dbReference type="GO" id="GO:0003989">
    <property type="term" value="F:acetyl-CoA carboxylase activity"/>
    <property type="evidence" value="ECO:0007669"/>
    <property type="project" value="InterPro"/>
</dbReference>
<dbReference type="GO" id="GO:0005524">
    <property type="term" value="F:ATP binding"/>
    <property type="evidence" value="ECO:0007669"/>
    <property type="project" value="UniProtKB-KW"/>
</dbReference>
<dbReference type="GO" id="GO:0016743">
    <property type="term" value="F:carboxyl- or carbamoyltransferase activity"/>
    <property type="evidence" value="ECO:0007669"/>
    <property type="project" value="UniProtKB-UniRule"/>
</dbReference>
<dbReference type="GO" id="GO:0006633">
    <property type="term" value="P:fatty acid biosynthetic process"/>
    <property type="evidence" value="ECO:0007669"/>
    <property type="project" value="UniProtKB-KW"/>
</dbReference>
<dbReference type="GO" id="GO:2001295">
    <property type="term" value="P:malonyl-CoA biosynthetic process"/>
    <property type="evidence" value="ECO:0007669"/>
    <property type="project" value="UniProtKB-UniRule"/>
</dbReference>
<dbReference type="Gene3D" id="3.90.226.10">
    <property type="entry name" value="2-enoyl-CoA Hydratase, Chain A, domain 1"/>
    <property type="match status" value="1"/>
</dbReference>
<dbReference type="HAMAP" id="MF_00823">
    <property type="entry name" value="AcetylCoA_CT_alpha"/>
    <property type="match status" value="1"/>
</dbReference>
<dbReference type="InterPro" id="IPR001095">
    <property type="entry name" value="Acetyl_CoA_COase_a_su"/>
</dbReference>
<dbReference type="InterPro" id="IPR029045">
    <property type="entry name" value="ClpP/crotonase-like_dom_sf"/>
</dbReference>
<dbReference type="InterPro" id="IPR011763">
    <property type="entry name" value="COA_CT_C"/>
</dbReference>
<dbReference type="NCBIfam" id="TIGR00513">
    <property type="entry name" value="accA"/>
    <property type="match status" value="1"/>
</dbReference>
<dbReference type="NCBIfam" id="NF041504">
    <property type="entry name" value="AccA_sub"/>
    <property type="match status" value="1"/>
</dbReference>
<dbReference type="NCBIfam" id="NF004344">
    <property type="entry name" value="PRK05724.1"/>
    <property type="match status" value="1"/>
</dbReference>
<dbReference type="PANTHER" id="PTHR42853">
    <property type="entry name" value="ACETYL-COENZYME A CARBOXYLASE CARBOXYL TRANSFERASE SUBUNIT ALPHA"/>
    <property type="match status" value="1"/>
</dbReference>
<dbReference type="PANTHER" id="PTHR42853:SF3">
    <property type="entry name" value="ACETYL-COENZYME A CARBOXYLASE CARBOXYL TRANSFERASE SUBUNIT ALPHA, CHLOROPLASTIC"/>
    <property type="match status" value="1"/>
</dbReference>
<dbReference type="Pfam" id="PF03255">
    <property type="entry name" value="ACCA"/>
    <property type="match status" value="1"/>
</dbReference>
<dbReference type="PRINTS" id="PR01069">
    <property type="entry name" value="ACCCTRFRASEA"/>
</dbReference>
<dbReference type="SUPFAM" id="SSF52096">
    <property type="entry name" value="ClpP/crotonase"/>
    <property type="match status" value="1"/>
</dbReference>
<dbReference type="PROSITE" id="PS50989">
    <property type="entry name" value="COA_CT_CTER"/>
    <property type="match status" value="1"/>
</dbReference>
<reference key="1">
    <citation type="submission" date="2006-06" db="EMBL/GenBank/DDBJ databases">
        <title>Complete sequence of Rubrobacter xylanophilus DSM 9941.</title>
        <authorList>
            <consortium name="US DOE Joint Genome Institute"/>
            <person name="Copeland A."/>
            <person name="Lucas S."/>
            <person name="Lapidus A."/>
            <person name="Barry K."/>
            <person name="Detter J.C."/>
            <person name="Glavina del Rio T."/>
            <person name="Hammon N."/>
            <person name="Israni S."/>
            <person name="Dalin E."/>
            <person name="Tice H."/>
            <person name="Pitluck S."/>
            <person name="Munk A.C."/>
            <person name="Brettin T."/>
            <person name="Bruce D."/>
            <person name="Han C."/>
            <person name="Tapia R."/>
            <person name="Gilna P."/>
            <person name="Schmutz J."/>
            <person name="Larimer F."/>
            <person name="Land M."/>
            <person name="Hauser L."/>
            <person name="Kyrpides N."/>
            <person name="Lykidis A."/>
            <person name="da Costa M.S."/>
            <person name="Rainey F.A."/>
            <person name="Empadinhas N."/>
            <person name="Jolivet E."/>
            <person name="Battista J.R."/>
            <person name="Richardson P."/>
        </authorList>
    </citation>
    <scope>NUCLEOTIDE SEQUENCE [LARGE SCALE GENOMIC DNA]</scope>
    <source>
        <strain>DSM 9941 / JCM 11954 / NBRC 16129 / PRD-1</strain>
    </source>
</reference>
<name>ACCA_RUBXD</name>